<organism>
    <name type="scientific">Saimiriine herpesvirus 2 (strain 11)</name>
    <name type="common">SaHV-2</name>
    <name type="synonym">Herpesvirus saimiri</name>
    <dbReference type="NCBI Taxonomy" id="10383"/>
    <lineage>
        <taxon>Viruses</taxon>
        <taxon>Duplodnaviria</taxon>
        <taxon>Heunggongvirae</taxon>
        <taxon>Peploviricota</taxon>
        <taxon>Herviviricetes</taxon>
        <taxon>Herpesvirales</taxon>
        <taxon>Orthoherpesviridae</taxon>
        <taxon>Gammaherpesvirinae</taxon>
        <taxon>Rhadinovirus</taxon>
        <taxon>Rhadinovirus saimiriinegamma2</taxon>
        <taxon>Saimiriine herpesvirus 2</taxon>
    </lineage>
</organism>
<organismHost>
    <name type="scientific">Saimiri sciureus</name>
    <name type="common">Common squirrel monkey</name>
    <dbReference type="NCBI Taxonomy" id="9521"/>
</organismHost>
<keyword id="KW-1185">Reference proteome</keyword>
<keyword id="KW-0946">Virion</keyword>
<keyword id="KW-0920">Virion tegument</keyword>
<dbReference type="EMBL" id="X05311">
    <property type="protein sequence ID" value="CAA28934.1"/>
    <property type="molecule type" value="Genomic_DNA"/>
</dbReference>
<dbReference type="EMBL" id="X64346">
    <property type="protein sequence ID" value="CAA45698.1"/>
    <property type="molecule type" value="Genomic_DNA"/>
</dbReference>
<dbReference type="EMBL" id="M86409">
    <property type="protein sequence ID" value="AAA46151.1"/>
    <property type="molecule type" value="Genomic_DNA"/>
</dbReference>
<dbReference type="EMBL" id="M16755">
    <property type="protein sequence ID" value="AAA66573.1"/>
    <property type="molecule type" value="Genomic_DNA"/>
</dbReference>
<dbReference type="EMBL" id="D00367">
    <property type="protein sequence ID" value="BAA00271.1"/>
    <property type="molecule type" value="Genomic_DNA"/>
</dbReference>
<dbReference type="RefSeq" id="NP_040277.1">
    <property type="nucleotide sequence ID" value="NC_001350.1"/>
</dbReference>
<dbReference type="SMR" id="P11282"/>
<dbReference type="KEGG" id="vg:1682508"/>
<dbReference type="Proteomes" id="UP000000587">
    <property type="component" value="Segment"/>
</dbReference>
<dbReference type="GO" id="GO:0043657">
    <property type="term" value="C:host cell"/>
    <property type="evidence" value="ECO:0007669"/>
    <property type="project" value="GOC"/>
</dbReference>
<dbReference type="GO" id="GO:0019033">
    <property type="term" value="C:viral tegument"/>
    <property type="evidence" value="ECO:0007669"/>
    <property type="project" value="UniProtKB-SubCell"/>
</dbReference>
<dbReference type="GO" id="GO:0004642">
    <property type="term" value="F:phosphoribosylformylglycinamidine synthase activity"/>
    <property type="evidence" value="ECO:0007669"/>
    <property type="project" value="TreeGrafter"/>
</dbReference>
<dbReference type="GO" id="GO:0075733">
    <property type="term" value="P:intracellular transport of virus"/>
    <property type="evidence" value="ECO:0007669"/>
    <property type="project" value="InterPro"/>
</dbReference>
<dbReference type="GO" id="GO:0006164">
    <property type="term" value="P:purine nucleotide biosynthetic process"/>
    <property type="evidence" value="ECO:0007669"/>
    <property type="project" value="TreeGrafter"/>
</dbReference>
<dbReference type="Gene3D" id="3.40.50.880">
    <property type="match status" value="1"/>
</dbReference>
<dbReference type="Gene3D" id="3.90.650.10">
    <property type="entry name" value="PurM-like C-terminal domain"/>
    <property type="match status" value="1"/>
</dbReference>
<dbReference type="Gene3D" id="3.30.1330.10">
    <property type="entry name" value="PurM-like, N-terminal domain"/>
    <property type="match status" value="1"/>
</dbReference>
<dbReference type="InterPro" id="IPR029062">
    <property type="entry name" value="Class_I_gatase-like"/>
</dbReference>
<dbReference type="InterPro" id="IPR055181">
    <property type="entry name" value="FGAR-AT_PurM_N-like"/>
</dbReference>
<dbReference type="InterPro" id="IPR010077">
    <property type="entry name" value="Herpes_virus_tegument"/>
</dbReference>
<dbReference type="InterPro" id="IPR010918">
    <property type="entry name" value="PurM-like_C_dom"/>
</dbReference>
<dbReference type="InterPro" id="IPR036676">
    <property type="entry name" value="PurM-like_C_sf"/>
</dbReference>
<dbReference type="InterPro" id="IPR036921">
    <property type="entry name" value="PurM-like_N_sf"/>
</dbReference>
<dbReference type="InterPro" id="IPR024346">
    <property type="entry name" value="Tegument_herpes_virus_N"/>
</dbReference>
<dbReference type="NCBIfam" id="TIGR01739">
    <property type="entry name" value="tegu_FGAM_synt"/>
    <property type="match status" value="1"/>
</dbReference>
<dbReference type="PANTHER" id="PTHR10099">
    <property type="entry name" value="PHOSPHORIBOSYLFORMYLGLYCINAMIDINE SYNTHASE"/>
    <property type="match status" value="1"/>
</dbReference>
<dbReference type="PANTHER" id="PTHR10099:SF1">
    <property type="entry name" value="PHOSPHORIBOSYLFORMYLGLYCINAMIDINE SYNTHASE"/>
    <property type="match status" value="1"/>
</dbReference>
<dbReference type="Pfam" id="PF02769">
    <property type="entry name" value="AIRS_C"/>
    <property type="match status" value="1"/>
</dbReference>
<dbReference type="Pfam" id="PF22689">
    <property type="entry name" value="FGAR-AT_PurM_N-like"/>
    <property type="match status" value="1"/>
</dbReference>
<dbReference type="Pfam" id="PF13507">
    <property type="entry name" value="GATase_5"/>
    <property type="match status" value="1"/>
</dbReference>
<dbReference type="Pfam" id="PF12818">
    <property type="entry name" value="Tegument_dsDNA"/>
    <property type="match status" value="1"/>
</dbReference>
<dbReference type="SMART" id="SM01211">
    <property type="entry name" value="GATase_5"/>
    <property type="match status" value="1"/>
</dbReference>
<dbReference type="SUPFAM" id="SSF52317">
    <property type="entry name" value="Class I glutamine amidotransferase-like"/>
    <property type="match status" value="1"/>
</dbReference>
<dbReference type="SUPFAM" id="SSF56042">
    <property type="entry name" value="PurM C-terminal domain-like"/>
    <property type="match status" value="1"/>
</dbReference>
<dbReference type="SUPFAM" id="SSF55326">
    <property type="entry name" value="PurM N-terminal domain-like"/>
    <property type="match status" value="1"/>
</dbReference>
<proteinExistence type="predicted"/>
<gene>
    <name type="primary">75</name>
    <name type="synonym">EILF1</name>
</gene>
<name>VP75_SHV21</name>
<sequence>MAANRHGGHLPLPEGLAAPTHRTVIYYAKCDFSPSEERCVNRFTGRPGPLTLMRDRSNVEHMVLITVKTDEEDRNTAEQNQARARSRSQETKKILTLLAPQIDYNPLTLDSLDHNLGQRAVIFSYGPNLHQRLTTSALELQRACKTLKLHSILRIESGRHFTSKAVQYVVENEDDILTAALIGENNLYQINTETLSATRLVTDALSWAEYKPLDVTCNAVMKPPREGVQPMCLVASSPVSDYNFNKYLMITPSCTAISLHMGHPYPRVSQGIFHVHSSTRTMGRQCCDYLFHSSLLPNGNTTAFACGYYVTSTTGSGSIPTSVNEQILHAASAQGRSLNNLGVPVVSGFLKPLPRCSEVPNNVITHVSQLRTASERDLNLCRVRAGQFVAAVGAYDPTSGPDKSPYLYRDSIDSLNRAIQATKLFYQMCETPCVSSYQREFGSCSTLHHLLALVSPKGMTVHISRLPEEITKALRSVPVLEEDTVCAFVSGYFFNCFSSQLFLVIDDKVKTTPSGQIHFTDILKKAGNLCGAPVYILGRTCNDIGIHCVNDLYHPRDLSVLDSQATSSMTLTVQPHASVVSATLQPQEPHEEDESIDWAMFGTSSTISNILSHPAVASKSNIIRRLDRCGNGLIAQQPGIGPSDAPVSDYAIICDSSMFPARLENDAQSIKKISKQEAQRAYAQIHKWFGTEKLFLNTISAKVIALGEQAYKLSRNPIVGVKYAIAEAITNIMFGPDCVLEDITLTVAAHWNKQETAALYRVLFACKEMCRELNVNLSITDASDSRDTPIQDTDAANTVVVTASARVTSIERITPALKKAENALVHVCLSKELTLSGSVFENSFTAFSSHLPDLDTSKLRDMFYAVKHLISKNLVVAGHDISDGGLITTAAEMCFASTFGVTVNLPSALPALMYLVSETPGALLEVPKEHLSTVTTLLSERGLTWYAVGTVNNVKNLSIYDNGTHLLTESINILNSKWMSYAEESFETCEPHIESMYRNDYGNNAMDLKHLEDLCTHKPLQLYTCPSHPVSVAVLTFPGCPDPVATLQAFANVGFLSYPISTEFLLQGNNLNAFSCLAVSGSSAFEEEGTGTRIAIYTLLQCDLAKNCLKEFFQRPDTLSLCCGELGTQLLAACQVVGDTHPSRGDISSNPESWTLELEPNASKHYESLWLNFHVPQTTKSIILQALRGTIFQDGLWQVLGLRYKHDAQEYIMQQNGTIAMSYHSAKINPYLYAMHYPRNPSGNSSVAGICSKNGRHLALLVEPALSFHTWQWQHIPKPLVTSPWALMYQCMFLWCVKE</sequence>
<comment type="subcellular location">
    <subcellularLocation>
        <location evidence="1">Virion tegument</location>
    </subcellularLocation>
</comment>
<evidence type="ECO:0000305" key="1"/>
<protein>
    <recommendedName>
        <fullName>Probable membrane antigen 75</fullName>
    </recommendedName>
    <alternativeName>
        <fullName>Tegument protein</fullName>
    </alternativeName>
</protein>
<accession>P11282</accession>
<feature type="chain" id="PRO_0000116189" description="Probable membrane antigen 75">
    <location>
        <begin position="1"/>
        <end position="1299"/>
    </location>
</feature>
<reference key="1">
    <citation type="journal article" date="1987" name="J. Virol.">
        <title>The 160,000-Mr virion protein encoded at the right end of the herpesvirus saimiri genome is homologous to the 140,000-Mr membrane antigen encoded at the left end of the Epstein-Barr virus genome.</title>
        <authorList>
            <person name="Cameron K.R."/>
            <person name="Stamminger T."/>
            <person name="Craxton M."/>
            <person name="Bodemer W."/>
            <person name="Honess R.W."/>
            <person name="Fleckenstein B."/>
        </authorList>
    </citation>
    <scope>NUCLEOTIDE SEQUENCE [GENOMIC DNA]</scope>
</reference>
<reference key="2">
    <citation type="journal article" date="1992" name="J. Virol.">
        <title>Primary structure of the herpesvirus saimiri genome.</title>
        <authorList>
            <person name="Albrecht J.-C."/>
            <person name="Nicholas J."/>
            <person name="Biller D."/>
            <person name="Cameron K.R."/>
            <person name="Biesinger B."/>
            <person name="Newman C."/>
            <person name="Wittmann S."/>
            <person name="Craxton M.A."/>
            <person name="Coleman H."/>
            <person name="Fleckenstein B."/>
            <person name="Honess R.W."/>
        </authorList>
    </citation>
    <scope>NUCLEOTIDE SEQUENCE [LARGE SCALE GENOMIC DNA]</scope>
</reference>
<reference key="3">
    <citation type="journal article" date="1992" name="Virology">
        <title>Analysis of nucleotide sequence of the rightmost 43 kbp of herpesvirus saimiri (HVS) L-DNA: general conservation of genetic organization between HVS and Epstein-Barr virus.</title>
        <authorList>
            <person name="Nicholas J."/>
            <person name="Cameron K.R."/>
            <person name="Coleman H."/>
            <person name="Newman C."/>
            <person name="Honess R.W."/>
        </authorList>
    </citation>
    <scope>NUCLEOTIDE SEQUENCE [GENOMIC DNA]</scope>
</reference>
<reference key="4">
    <citation type="journal article" date="1987" name="J. Gen. Virol.">
        <title>Organization of terminal reiterations in the virion DNA of herpesvirus saimiri.</title>
        <authorList>
            <person name="Stamminger T."/>
            <person name="Honess R.W."/>
            <person name="Young D.F."/>
            <person name="Bodemer W."/>
            <person name="Blair E.D."/>
            <person name="Fleckenstein B."/>
        </authorList>
    </citation>
    <scope>NUCLEOTIDE SEQUENCE [GENOMIC DNA] OF 1-8</scope>
</reference>